<keyword id="KW-0067">ATP-binding</keyword>
<keyword id="KW-0131">Cell cycle</keyword>
<keyword id="KW-0132">Cell division</keyword>
<keyword id="KW-0133">Cell shape</keyword>
<keyword id="KW-0961">Cell wall biogenesis/degradation</keyword>
<keyword id="KW-0963">Cytoplasm</keyword>
<keyword id="KW-0436">Ligase</keyword>
<keyword id="KW-0547">Nucleotide-binding</keyword>
<keyword id="KW-0573">Peptidoglycan synthesis</keyword>
<keyword id="KW-1185">Reference proteome</keyword>
<reference key="1">
    <citation type="journal article" date="2003" name="Proc. Natl. Acad. Sci. U.S.A.">
        <title>Complete genome sequence of Lactobacillus plantarum WCFS1.</title>
        <authorList>
            <person name="Kleerebezem M."/>
            <person name="Boekhorst J."/>
            <person name="van Kranenburg R."/>
            <person name="Molenaar D."/>
            <person name="Kuipers O.P."/>
            <person name="Leer R."/>
            <person name="Tarchini R."/>
            <person name="Peters S.A."/>
            <person name="Sandbrink H.M."/>
            <person name="Fiers M.W.E.J."/>
            <person name="Stiekema W."/>
            <person name="Klein Lankhorst R.M."/>
            <person name="Bron P.A."/>
            <person name="Hoffer S.M."/>
            <person name="Nierop Groot M.N."/>
            <person name="Kerkhoven R."/>
            <person name="De Vries M."/>
            <person name="Ursing B."/>
            <person name="De Vos W.M."/>
            <person name="Siezen R.J."/>
        </authorList>
    </citation>
    <scope>NUCLEOTIDE SEQUENCE [LARGE SCALE GENOMIC DNA]</scope>
    <source>
        <strain>ATCC BAA-793 / NCIMB 8826 / WCFS1</strain>
    </source>
</reference>
<reference key="2">
    <citation type="journal article" date="2012" name="J. Bacteriol.">
        <title>Complete resequencing and reannotation of the Lactobacillus plantarum WCFS1 genome.</title>
        <authorList>
            <person name="Siezen R.J."/>
            <person name="Francke C."/>
            <person name="Renckens B."/>
            <person name="Boekhorst J."/>
            <person name="Wels M."/>
            <person name="Kleerebezem M."/>
            <person name="van Hijum S.A."/>
        </authorList>
    </citation>
    <scope>NUCLEOTIDE SEQUENCE [LARGE SCALE GENOMIC DNA]</scope>
    <scope>GENOME REANNOTATION</scope>
    <source>
        <strain>ATCC BAA-793 / NCIMB 8826 / WCFS1</strain>
    </source>
</reference>
<feature type="chain" id="PRO_0000109030" description="UDP-N-acetylmuramoylalanine--D-glutamate ligase">
    <location>
        <begin position="1"/>
        <end position="459"/>
    </location>
</feature>
<feature type="binding site" evidence="1">
    <location>
        <begin position="119"/>
        <end position="125"/>
    </location>
    <ligand>
        <name>ATP</name>
        <dbReference type="ChEBI" id="CHEBI:30616"/>
    </ligand>
</feature>
<organism>
    <name type="scientific">Lactiplantibacillus plantarum (strain ATCC BAA-793 / NCIMB 8826 / WCFS1)</name>
    <name type="common">Lactobacillus plantarum</name>
    <dbReference type="NCBI Taxonomy" id="220668"/>
    <lineage>
        <taxon>Bacteria</taxon>
        <taxon>Bacillati</taxon>
        <taxon>Bacillota</taxon>
        <taxon>Bacilli</taxon>
        <taxon>Lactobacillales</taxon>
        <taxon>Lactobacillaceae</taxon>
        <taxon>Lactiplantibacillus</taxon>
    </lineage>
</organism>
<proteinExistence type="inferred from homology"/>
<name>MURD_LACPL</name>
<sequence>MKSVEQYRNQKVLVLGLAKSGVNAARLLHKLGAFVTVNDKKKFDENPDAQELLSDGIKVITGGHPLSLLDEDFKVVVKNPGIPYSNPIVSGAQEKGIPVITEVELASQILAGELIGVTGTNGKTTTTTMITMMLNQRTNAGKAYVAGNIGVPASAIAQKATAADTMVTELSSFMLCGIQTLHPHIAVITNIYSTHLDYHGSRENYVKAKMRITMNQTANDYLVINWDSEEWRQLSKQSQATVVPFSRQANTKDGAYEEAGKLYFKDEYIMDAADIRIPGDHNVENALAAIAVAKLQAVPTAGIVQVLKTFTGVRHRTQYVETYQDRQFYNDSKATNLVSTEMALKGFDQPVILLAGGLDRGNTFEKLAPALKAHVKTLIVFGETAEKMADAGRLAGIQDIEFTDNCETAVPIAWQHSQAGDIIMLSPACASWDQYPNFEVRGDRFIKAIEQLTGKAEEN</sequence>
<comment type="function">
    <text evidence="1">Cell wall formation. Catalyzes the addition of glutamate to the nucleotide precursor UDP-N-acetylmuramoyl-L-alanine (UMA).</text>
</comment>
<comment type="catalytic activity">
    <reaction evidence="1">
        <text>UDP-N-acetyl-alpha-D-muramoyl-L-alanine + D-glutamate + ATP = UDP-N-acetyl-alpha-D-muramoyl-L-alanyl-D-glutamate + ADP + phosphate + H(+)</text>
        <dbReference type="Rhea" id="RHEA:16429"/>
        <dbReference type="ChEBI" id="CHEBI:15378"/>
        <dbReference type="ChEBI" id="CHEBI:29986"/>
        <dbReference type="ChEBI" id="CHEBI:30616"/>
        <dbReference type="ChEBI" id="CHEBI:43474"/>
        <dbReference type="ChEBI" id="CHEBI:83898"/>
        <dbReference type="ChEBI" id="CHEBI:83900"/>
        <dbReference type="ChEBI" id="CHEBI:456216"/>
        <dbReference type="EC" id="6.3.2.9"/>
    </reaction>
</comment>
<comment type="pathway">
    <text evidence="1">Cell wall biogenesis; peptidoglycan biosynthesis.</text>
</comment>
<comment type="subcellular location">
    <subcellularLocation>
        <location evidence="1">Cytoplasm</location>
    </subcellularLocation>
</comment>
<comment type="similarity">
    <text evidence="1">Belongs to the MurCDEF family.</text>
</comment>
<gene>
    <name evidence="1" type="primary">murD</name>
    <name type="ordered locus">lp_2197</name>
</gene>
<protein>
    <recommendedName>
        <fullName evidence="1">UDP-N-acetylmuramoylalanine--D-glutamate ligase</fullName>
        <ecNumber evidence="1">6.3.2.9</ecNumber>
    </recommendedName>
    <alternativeName>
        <fullName evidence="1">D-glutamic acid-adding enzyme</fullName>
    </alternativeName>
    <alternativeName>
        <fullName evidence="1">UDP-N-acetylmuramoyl-L-alanyl-D-glutamate synthetase</fullName>
    </alternativeName>
</protein>
<dbReference type="EC" id="6.3.2.9" evidence="1"/>
<dbReference type="EMBL" id="AL935263">
    <property type="protein sequence ID" value="CCC79416.1"/>
    <property type="molecule type" value="Genomic_DNA"/>
</dbReference>
<dbReference type="RefSeq" id="WP_003644611.1">
    <property type="nucleotide sequence ID" value="NC_004567.2"/>
</dbReference>
<dbReference type="RefSeq" id="YP_004889930.1">
    <property type="nucleotide sequence ID" value="NC_004567.2"/>
</dbReference>
<dbReference type="SMR" id="Q88V80"/>
<dbReference type="STRING" id="220668.lp_2197"/>
<dbReference type="EnsemblBacteria" id="CCC79416">
    <property type="protein sequence ID" value="CCC79416"/>
    <property type="gene ID" value="lp_2197"/>
</dbReference>
<dbReference type="GeneID" id="77215572"/>
<dbReference type="KEGG" id="lpl:lp_2197"/>
<dbReference type="PATRIC" id="fig|220668.9.peg.1857"/>
<dbReference type="eggNOG" id="COG0771">
    <property type="taxonomic scope" value="Bacteria"/>
</dbReference>
<dbReference type="HOGENOM" id="CLU_032540_0_1_9"/>
<dbReference type="OrthoDB" id="9809796at2"/>
<dbReference type="PhylomeDB" id="Q88V80"/>
<dbReference type="UniPathway" id="UPA00219"/>
<dbReference type="Proteomes" id="UP000000432">
    <property type="component" value="Chromosome"/>
</dbReference>
<dbReference type="GO" id="GO:0005737">
    <property type="term" value="C:cytoplasm"/>
    <property type="evidence" value="ECO:0007669"/>
    <property type="project" value="UniProtKB-SubCell"/>
</dbReference>
<dbReference type="GO" id="GO:0005524">
    <property type="term" value="F:ATP binding"/>
    <property type="evidence" value="ECO:0007669"/>
    <property type="project" value="UniProtKB-UniRule"/>
</dbReference>
<dbReference type="GO" id="GO:0004326">
    <property type="term" value="F:tetrahydrofolylpolyglutamate synthase activity"/>
    <property type="evidence" value="ECO:0007669"/>
    <property type="project" value="InterPro"/>
</dbReference>
<dbReference type="GO" id="GO:0008764">
    <property type="term" value="F:UDP-N-acetylmuramoylalanine-D-glutamate ligase activity"/>
    <property type="evidence" value="ECO:0007669"/>
    <property type="project" value="UniProtKB-UniRule"/>
</dbReference>
<dbReference type="GO" id="GO:0051301">
    <property type="term" value="P:cell division"/>
    <property type="evidence" value="ECO:0007669"/>
    <property type="project" value="UniProtKB-KW"/>
</dbReference>
<dbReference type="GO" id="GO:0071555">
    <property type="term" value="P:cell wall organization"/>
    <property type="evidence" value="ECO:0007669"/>
    <property type="project" value="UniProtKB-KW"/>
</dbReference>
<dbReference type="GO" id="GO:0009252">
    <property type="term" value="P:peptidoglycan biosynthetic process"/>
    <property type="evidence" value="ECO:0007669"/>
    <property type="project" value="UniProtKB-UniRule"/>
</dbReference>
<dbReference type="GO" id="GO:0008360">
    <property type="term" value="P:regulation of cell shape"/>
    <property type="evidence" value="ECO:0007669"/>
    <property type="project" value="UniProtKB-KW"/>
</dbReference>
<dbReference type="Gene3D" id="3.90.190.20">
    <property type="entry name" value="Mur ligase, C-terminal domain"/>
    <property type="match status" value="1"/>
</dbReference>
<dbReference type="Gene3D" id="3.40.1190.10">
    <property type="entry name" value="Mur-like, catalytic domain"/>
    <property type="match status" value="1"/>
</dbReference>
<dbReference type="Gene3D" id="3.40.50.720">
    <property type="entry name" value="NAD(P)-binding Rossmann-like Domain"/>
    <property type="match status" value="1"/>
</dbReference>
<dbReference type="HAMAP" id="MF_00639">
    <property type="entry name" value="MurD"/>
    <property type="match status" value="1"/>
</dbReference>
<dbReference type="InterPro" id="IPR018109">
    <property type="entry name" value="Folylpolyglutamate_synth_CS"/>
</dbReference>
<dbReference type="InterPro" id="IPR036565">
    <property type="entry name" value="Mur-like_cat_sf"/>
</dbReference>
<dbReference type="InterPro" id="IPR004101">
    <property type="entry name" value="Mur_ligase_C"/>
</dbReference>
<dbReference type="InterPro" id="IPR036615">
    <property type="entry name" value="Mur_ligase_C_dom_sf"/>
</dbReference>
<dbReference type="InterPro" id="IPR013221">
    <property type="entry name" value="Mur_ligase_cen"/>
</dbReference>
<dbReference type="InterPro" id="IPR005762">
    <property type="entry name" value="MurD"/>
</dbReference>
<dbReference type="NCBIfam" id="TIGR01087">
    <property type="entry name" value="murD"/>
    <property type="match status" value="1"/>
</dbReference>
<dbReference type="PANTHER" id="PTHR43692">
    <property type="entry name" value="UDP-N-ACETYLMURAMOYLALANINE--D-GLUTAMATE LIGASE"/>
    <property type="match status" value="1"/>
</dbReference>
<dbReference type="PANTHER" id="PTHR43692:SF1">
    <property type="entry name" value="UDP-N-ACETYLMURAMOYLALANINE--D-GLUTAMATE LIGASE"/>
    <property type="match status" value="1"/>
</dbReference>
<dbReference type="Pfam" id="PF02875">
    <property type="entry name" value="Mur_ligase_C"/>
    <property type="match status" value="1"/>
</dbReference>
<dbReference type="Pfam" id="PF08245">
    <property type="entry name" value="Mur_ligase_M"/>
    <property type="match status" value="1"/>
</dbReference>
<dbReference type="Pfam" id="PF21799">
    <property type="entry name" value="MurD-like_N"/>
    <property type="match status" value="1"/>
</dbReference>
<dbReference type="SUPFAM" id="SSF51984">
    <property type="entry name" value="MurCD N-terminal domain"/>
    <property type="match status" value="1"/>
</dbReference>
<dbReference type="SUPFAM" id="SSF53623">
    <property type="entry name" value="MurD-like peptide ligases, catalytic domain"/>
    <property type="match status" value="1"/>
</dbReference>
<dbReference type="SUPFAM" id="SSF53244">
    <property type="entry name" value="MurD-like peptide ligases, peptide-binding domain"/>
    <property type="match status" value="1"/>
</dbReference>
<evidence type="ECO:0000255" key="1">
    <source>
        <dbReference type="HAMAP-Rule" id="MF_00639"/>
    </source>
</evidence>
<accession>Q88V80</accession>
<accession>F9UQC7</accession>